<sequence>MPRYKLIIEYDGTPYCGWQIQENGPSIQGALEDAAKAICGEAIRVRGAGRTDAGVHALAQVAHCDVPKQLPPGRLRDALNAHLRPQPIGVITAEIVPDDFEARFSAIKRHYVYRISNRRANLALAINRAWRVPRRLDSDAMHEAAQRLIGKHDFTTFRDTECQAKSPDKTLDQLDVIRDGDEIRIVTSARSFLHSQVRSMVGSLVWVGEGRWSADDLAAALAARSRSACGPVAPPDGLYLVKVDYE</sequence>
<dbReference type="EC" id="5.4.99.12" evidence="1"/>
<dbReference type="EMBL" id="CP000463">
    <property type="protein sequence ID" value="ABJ04612.1"/>
    <property type="molecule type" value="Genomic_DNA"/>
</dbReference>
<dbReference type="SMR" id="Q07TX2"/>
<dbReference type="STRING" id="316055.RPE_0654"/>
<dbReference type="KEGG" id="rpe:RPE_0654"/>
<dbReference type="eggNOG" id="COG0101">
    <property type="taxonomic scope" value="Bacteria"/>
</dbReference>
<dbReference type="HOGENOM" id="CLU_014673_0_2_5"/>
<dbReference type="OrthoDB" id="9811823at2"/>
<dbReference type="GO" id="GO:0003723">
    <property type="term" value="F:RNA binding"/>
    <property type="evidence" value="ECO:0007669"/>
    <property type="project" value="InterPro"/>
</dbReference>
<dbReference type="GO" id="GO:0160147">
    <property type="term" value="F:tRNA pseudouridine(38-40) synthase activity"/>
    <property type="evidence" value="ECO:0007669"/>
    <property type="project" value="UniProtKB-EC"/>
</dbReference>
<dbReference type="GO" id="GO:0031119">
    <property type="term" value="P:tRNA pseudouridine synthesis"/>
    <property type="evidence" value="ECO:0007669"/>
    <property type="project" value="UniProtKB-UniRule"/>
</dbReference>
<dbReference type="CDD" id="cd02570">
    <property type="entry name" value="PseudoU_synth_EcTruA"/>
    <property type="match status" value="1"/>
</dbReference>
<dbReference type="FunFam" id="3.30.70.580:FF:000001">
    <property type="entry name" value="tRNA pseudouridine synthase A"/>
    <property type="match status" value="1"/>
</dbReference>
<dbReference type="Gene3D" id="3.30.70.660">
    <property type="entry name" value="Pseudouridine synthase I, catalytic domain, C-terminal subdomain"/>
    <property type="match status" value="1"/>
</dbReference>
<dbReference type="Gene3D" id="3.30.70.580">
    <property type="entry name" value="Pseudouridine synthase I, catalytic domain, N-terminal subdomain"/>
    <property type="match status" value="1"/>
</dbReference>
<dbReference type="HAMAP" id="MF_00171">
    <property type="entry name" value="TruA"/>
    <property type="match status" value="1"/>
</dbReference>
<dbReference type="InterPro" id="IPR020103">
    <property type="entry name" value="PsdUridine_synth_cat_dom_sf"/>
</dbReference>
<dbReference type="InterPro" id="IPR001406">
    <property type="entry name" value="PsdUridine_synth_TruA"/>
</dbReference>
<dbReference type="InterPro" id="IPR020097">
    <property type="entry name" value="PsdUridine_synth_TruA_a/b_dom"/>
</dbReference>
<dbReference type="InterPro" id="IPR020095">
    <property type="entry name" value="PsdUridine_synth_TruA_C"/>
</dbReference>
<dbReference type="InterPro" id="IPR020094">
    <property type="entry name" value="TruA/RsuA/RluB/E/F_N"/>
</dbReference>
<dbReference type="NCBIfam" id="TIGR00071">
    <property type="entry name" value="hisT_truA"/>
    <property type="match status" value="1"/>
</dbReference>
<dbReference type="PANTHER" id="PTHR11142">
    <property type="entry name" value="PSEUDOURIDYLATE SYNTHASE"/>
    <property type="match status" value="1"/>
</dbReference>
<dbReference type="PANTHER" id="PTHR11142:SF0">
    <property type="entry name" value="TRNA PSEUDOURIDINE SYNTHASE-LIKE 1"/>
    <property type="match status" value="1"/>
</dbReference>
<dbReference type="Pfam" id="PF01416">
    <property type="entry name" value="PseudoU_synth_1"/>
    <property type="match status" value="2"/>
</dbReference>
<dbReference type="PIRSF" id="PIRSF001430">
    <property type="entry name" value="tRNA_psdUrid_synth"/>
    <property type="match status" value="1"/>
</dbReference>
<dbReference type="SUPFAM" id="SSF55120">
    <property type="entry name" value="Pseudouridine synthase"/>
    <property type="match status" value="1"/>
</dbReference>
<gene>
    <name evidence="1" type="primary">truA</name>
    <name type="ordered locus">RPE_0654</name>
</gene>
<organism>
    <name type="scientific">Rhodopseudomonas palustris (strain BisA53)</name>
    <dbReference type="NCBI Taxonomy" id="316055"/>
    <lineage>
        <taxon>Bacteria</taxon>
        <taxon>Pseudomonadati</taxon>
        <taxon>Pseudomonadota</taxon>
        <taxon>Alphaproteobacteria</taxon>
        <taxon>Hyphomicrobiales</taxon>
        <taxon>Nitrobacteraceae</taxon>
        <taxon>Rhodopseudomonas</taxon>
    </lineage>
</organism>
<reference key="1">
    <citation type="submission" date="2006-09" db="EMBL/GenBank/DDBJ databases">
        <title>Complete sequence of Rhodopseudomonas palustris BisA53.</title>
        <authorList>
            <consortium name="US DOE Joint Genome Institute"/>
            <person name="Copeland A."/>
            <person name="Lucas S."/>
            <person name="Lapidus A."/>
            <person name="Barry K."/>
            <person name="Detter J.C."/>
            <person name="Glavina del Rio T."/>
            <person name="Hammon N."/>
            <person name="Israni S."/>
            <person name="Dalin E."/>
            <person name="Tice H."/>
            <person name="Pitluck S."/>
            <person name="Chain P."/>
            <person name="Malfatti S."/>
            <person name="Shin M."/>
            <person name="Vergez L."/>
            <person name="Schmutz J."/>
            <person name="Larimer F."/>
            <person name="Land M."/>
            <person name="Hauser L."/>
            <person name="Pelletier D.A."/>
            <person name="Kyrpides N."/>
            <person name="Kim E."/>
            <person name="Harwood C.S."/>
            <person name="Oda Y."/>
            <person name="Richardson P."/>
        </authorList>
    </citation>
    <scope>NUCLEOTIDE SEQUENCE [LARGE SCALE GENOMIC DNA]</scope>
    <source>
        <strain>BisA53</strain>
    </source>
</reference>
<comment type="function">
    <text evidence="1">Formation of pseudouridine at positions 38, 39 and 40 in the anticodon stem and loop of transfer RNAs.</text>
</comment>
<comment type="catalytic activity">
    <reaction evidence="1">
        <text>uridine(38/39/40) in tRNA = pseudouridine(38/39/40) in tRNA</text>
        <dbReference type="Rhea" id="RHEA:22376"/>
        <dbReference type="Rhea" id="RHEA-COMP:10085"/>
        <dbReference type="Rhea" id="RHEA-COMP:10087"/>
        <dbReference type="ChEBI" id="CHEBI:65314"/>
        <dbReference type="ChEBI" id="CHEBI:65315"/>
        <dbReference type="EC" id="5.4.99.12"/>
    </reaction>
</comment>
<comment type="subunit">
    <text evidence="1">Homodimer.</text>
</comment>
<comment type="similarity">
    <text evidence="1">Belongs to the tRNA pseudouridine synthase TruA family.</text>
</comment>
<protein>
    <recommendedName>
        <fullName evidence="1">tRNA pseudouridine synthase A</fullName>
        <ecNumber evidence="1">5.4.99.12</ecNumber>
    </recommendedName>
    <alternativeName>
        <fullName evidence="1">tRNA pseudouridine(38-40) synthase</fullName>
    </alternativeName>
    <alternativeName>
        <fullName evidence="1">tRNA pseudouridylate synthase I</fullName>
    </alternativeName>
    <alternativeName>
        <fullName evidence="1">tRNA-uridine isomerase I</fullName>
    </alternativeName>
</protein>
<name>TRUA_RHOP5</name>
<keyword id="KW-0413">Isomerase</keyword>
<keyword id="KW-0819">tRNA processing</keyword>
<feature type="chain" id="PRO_1000017150" description="tRNA pseudouridine synthase A">
    <location>
        <begin position="1"/>
        <end position="246"/>
    </location>
</feature>
<feature type="active site" description="Nucleophile" evidence="1">
    <location>
        <position position="52"/>
    </location>
</feature>
<feature type="binding site" evidence="1">
    <location>
        <position position="111"/>
    </location>
    <ligand>
        <name>substrate</name>
    </ligand>
</feature>
<evidence type="ECO:0000255" key="1">
    <source>
        <dbReference type="HAMAP-Rule" id="MF_00171"/>
    </source>
</evidence>
<proteinExistence type="inferred from homology"/>
<accession>Q07TX2</accession>